<sequence>MAKGFNVAIDGPAGAGKSTVAKKTAEKLGFLYIDTGAMYRAITFAALAEGIDLHDGKALGKLLEKSELRLESSNEGTAVFWNGADITAAIRTNEVNSNVSLVASHREVREGMTAMQQELAKSKNAVLDGRDIGTHVLPDANVKVFLTASVEERARRRHLEQLEKGLPSDFEQLKKDIAKRDELDSTRAIAPLKQAADAQVVDTTSMGIDEVVETILDLVKEHSRQ</sequence>
<comment type="catalytic activity">
    <reaction evidence="1">
        <text>CMP + ATP = CDP + ADP</text>
        <dbReference type="Rhea" id="RHEA:11600"/>
        <dbReference type="ChEBI" id="CHEBI:30616"/>
        <dbReference type="ChEBI" id="CHEBI:58069"/>
        <dbReference type="ChEBI" id="CHEBI:60377"/>
        <dbReference type="ChEBI" id="CHEBI:456216"/>
        <dbReference type="EC" id="2.7.4.25"/>
    </reaction>
</comment>
<comment type="catalytic activity">
    <reaction evidence="1">
        <text>dCMP + ATP = dCDP + ADP</text>
        <dbReference type="Rhea" id="RHEA:25094"/>
        <dbReference type="ChEBI" id="CHEBI:30616"/>
        <dbReference type="ChEBI" id="CHEBI:57566"/>
        <dbReference type="ChEBI" id="CHEBI:58593"/>
        <dbReference type="ChEBI" id="CHEBI:456216"/>
        <dbReference type="EC" id="2.7.4.25"/>
    </reaction>
</comment>
<comment type="subcellular location">
    <subcellularLocation>
        <location evidence="1">Cytoplasm</location>
    </subcellularLocation>
</comment>
<comment type="similarity">
    <text evidence="1">Belongs to the cytidylate kinase family. Type 1 subfamily.</text>
</comment>
<comment type="sequence caution" evidence="2">
    <conflict type="erroneous initiation">
        <sequence resource="EMBL-CDS" id="BAD64407"/>
    </conflict>
</comment>
<name>KCY_SHOC1</name>
<protein>
    <recommendedName>
        <fullName evidence="1">Cytidylate kinase</fullName>
        <shortName evidence="1">CK</shortName>
        <ecNumber evidence="1">2.7.4.25</ecNumber>
    </recommendedName>
    <alternativeName>
        <fullName evidence="1">Cytidine monophosphate kinase</fullName>
        <shortName evidence="1">CMP kinase</shortName>
    </alternativeName>
</protein>
<evidence type="ECO:0000255" key="1">
    <source>
        <dbReference type="HAMAP-Rule" id="MF_00238"/>
    </source>
</evidence>
<evidence type="ECO:0000305" key="2"/>
<proteinExistence type="inferred from homology"/>
<organism>
    <name type="scientific">Shouchella clausii (strain KSM-K16)</name>
    <name type="common">Alkalihalobacillus clausii</name>
    <dbReference type="NCBI Taxonomy" id="66692"/>
    <lineage>
        <taxon>Bacteria</taxon>
        <taxon>Bacillati</taxon>
        <taxon>Bacillota</taxon>
        <taxon>Bacilli</taxon>
        <taxon>Bacillales</taxon>
        <taxon>Bacillaceae</taxon>
        <taxon>Shouchella</taxon>
    </lineage>
</organism>
<accession>Q5WGU8</accession>
<reference key="1">
    <citation type="submission" date="2003-10" db="EMBL/GenBank/DDBJ databases">
        <title>The complete genome sequence of the alkaliphilic Bacillus clausii KSM-K16.</title>
        <authorList>
            <person name="Takaki Y."/>
            <person name="Kageyama Y."/>
            <person name="Shimamura S."/>
            <person name="Suzuki H."/>
            <person name="Nishi S."/>
            <person name="Hatada Y."/>
            <person name="Kawai S."/>
            <person name="Ito S."/>
            <person name="Horikoshi K."/>
        </authorList>
    </citation>
    <scope>NUCLEOTIDE SEQUENCE [LARGE SCALE GENOMIC DNA]</scope>
    <source>
        <strain>KSM-K16</strain>
    </source>
</reference>
<feature type="chain" id="PRO_0000131879" description="Cytidylate kinase">
    <location>
        <begin position="1"/>
        <end position="225"/>
    </location>
</feature>
<feature type="binding site" evidence="1">
    <location>
        <begin position="11"/>
        <end position="19"/>
    </location>
    <ligand>
        <name>ATP</name>
        <dbReference type="ChEBI" id="CHEBI:30616"/>
    </ligand>
</feature>
<keyword id="KW-0067">ATP-binding</keyword>
<keyword id="KW-0963">Cytoplasm</keyword>
<keyword id="KW-0418">Kinase</keyword>
<keyword id="KW-0547">Nucleotide-binding</keyword>
<keyword id="KW-1185">Reference proteome</keyword>
<keyword id="KW-0808">Transferase</keyword>
<gene>
    <name evidence="1" type="primary">cmk</name>
    <name type="ordered locus">ABC1872</name>
</gene>
<dbReference type="EC" id="2.7.4.25" evidence="1"/>
<dbReference type="EMBL" id="AP006627">
    <property type="protein sequence ID" value="BAD64407.1"/>
    <property type="status" value="ALT_INIT"/>
    <property type="molecule type" value="Genomic_DNA"/>
</dbReference>
<dbReference type="RefSeq" id="WP_035204260.1">
    <property type="nucleotide sequence ID" value="NC_006582.1"/>
</dbReference>
<dbReference type="SMR" id="Q5WGU8"/>
<dbReference type="STRING" id="66692.ABC1872"/>
<dbReference type="KEGG" id="bcl:ABC1872"/>
<dbReference type="eggNOG" id="COG0283">
    <property type="taxonomic scope" value="Bacteria"/>
</dbReference>
<dbReference type="HOGENOM" id="CLU_079959_0_2_9"/>
<dbReference type="OrthoDB" id="9807434at2"/>
<dbReference type="Proteomes" id="UP000001168">
    <property type="component" value="Chromosome"/>
</dbReference>
<dbReference type="GO" id="GO:0005829">
    <property type="term" value="C:cytosol"/>
    <property type="evidence" value="ECO:0007669"/>
    <property type="project" value="TreeGrafter"/>
</dbReference>
<dbReference type="GO" id="GO:0005524">
    <property type="term" value="F:ATP binding"/>
    <property type="evidence" value="ECO:0007669"/>
    <property type="project" value="UniProtKB-UniRule"/>
</dbReference>
<dbReference type="GO" id="GO:0036430">
    <property type="term" value="F:CMP kinase activity"/>
    <property type="evidence" value="ECO:0007669"/>
    <property type="project" value="RHEA"/>
</dbReference>
<dbReference type="GO" id="GO:0036431">
    <property type="term" value="F:dCMP kinase activity"/>
    <property type="evidence" value="ECO:0007669"/>
    <property type="project" value="RHEA"/>
</dbReference>
<dbReference type="GO" id="GO:0015949">
    <property type="term" value="P:nucleobase-containing small molecule interconversion"/>
    <property type="evidence" value="ECO:0007669"/>
    <property type="project" value="TreeGrafter"/>
</dbReference>
<dbReference type="GO" id="GO:0006220">
    <property type="term" value="P:pyrimidine nucleotide metabolic process"/>
    <property type="evidence" value="ECO:0007669"/>
    <property type="project" value="UniProtKB-UniRule"/>
</dbReference>
<dbReference type="CDD" id="cd02020">
    <property type="entry name" value="CMPK"/>
    <property type="match status" value="1"/>
</dbReference>
<dbReference type="Gene3D" id="3.40.50.300">
    <property type="entry name" value="P-loop containing nucleotide triphosphate hydrolases"/>
    <property type="match status" value="1"/>
</dbReference>
<dbReference type="HAMAP" id="MF_00238">
    <property type="entry name" value="Cytidyl_kinase_type1"/>
    <property type="match status" value="1"/>
</dbReference>
<dbReference type="InterPro" id="IPR003136">
    <property type="entry name" value="Cytidylate_kin"/>
</dbReference>
<dbReference type="InterPro" id="IPR011994">
    <property type="entry name" value="Cytidylate_kinase_dom"/>
</dbReference>
<dbReference type="InterPro" id="IPR027417">
    <property type="entry name" value="P-loop_NTPase"/>
</dbReference>
<dbReference type="NCBIfam" id="TIGR00017">
    <property type="entry name" value="cmk"/>
    <property type="match status" value="1"/>
</dbReference>
<dbReference type="PANTHER" id="PTHR21299:SF2">
    <property type="entry name" value="CYTIDYLATE KINASE"/>
    <property type="match status" value="1"/>
</dbReference>
<dbReference type="PANTHER" id="PTHR21299">
    <property type="entry name" value="CYTIDYLATE KINASE/PANTOATE-BETA-ALANINE LIGASE"/>
    <property type="match status" value="1"/>
</dbReference>
<dbReference type="Pfam" id="PF02224">
    <property type="entry name" value="Cytidylate_kin"/>
    <property type="match status" value="1"/>
</dbReference>
<dbReference type="SUPFAM" id="SSF52540">
    <property type="entry name" value="P-loop containing nucleoside triphosphate hydrolases"/>
    <property type="match status" value="1"/>
</dbReference>